<feature type="chain" id="PRO_0000056589" description="Salicylaldehyde dehydrogenase">
    <location>
        <begin position="1"/>
        <end position="483"/>
    </location>
</feature>
<feature type="active site" evidence="2">
    <location>
        <position position="250"/>
    </location>
</feature>
<feature type="active site" evidence="2">
    <location>
        <position position="284"/>
    </location>
</feature>
<feature type="binding site" evidence="1">
    <location>
        <begin position="228"/>
        <end position="233"/>
    </location>
    <ligand>
        <name>NAD(+)</name>
        <dbReference type="ChEBI" id="CHEBI:57540"/>
    </ligand>
</feature>
<feature type="sequence conflict" description="In Ref. 2; CAA74578." evidence="3" ref="2">
    <original>V</original>
    <variation>RL</variation>
    <location>
        <position position="318"/>
    </location>
</feature>
<feature type="sequence conflict" description="In Ref. 2; CAA74578." evidence="3" ref="2">
    <original>I</original>
    <variation>M</variation>
    <location>
        <position position="365"/>
    </location>
</feature>
<keyword id="KW-0058">Aromatic hydrocarbons catabolism</keyword>
<keyword id="KW-0520">NAD</keyword>
<keyword id="KW-0560">Oxidoreductase</keyword>
<keyword id="KW-0614">Plasmid</keyword>
<gene>
    <name type="primary">nahF</name>
</gene>
<proteinExistence type="inferred from homology"/>
<evidence type="ECO:0000250" key="1"/>
<evidence type="ECO:0000255" key="2">
    <source>
        <dbReference type="PROSITE-ProRule" id="PRU10007"/>
    </source>
</evidence>
<evidence type="ECO:0000305" key="3"/>
<geneLocation type="plasmid">
    <name>NPL1</name>
</geneLocation>
<geneLocation type="plasmid">
    <name>NPL-41</name>
</geneLocation>
<name>NAHF_PSEPU</name>
<accession>P0A391</accession>
<accession>O34269</accession>
<accession>Q52460</accession>
<sequence>MKTKLFINNAWIDSSDQQTFERIHPVSSDVVTESANATVTDAIKAAQAAEEAFKTWKAVGPSERRRLLLKVADVMESKTPKFIEVMAMEVGASALWAGFNVHASANVFREAASLATQIQGETIPTDKAETLSMTLRQPVGPILSIVPWNGTAVLAARAIAYPLVCGNTVVFKGSEFSPATHALITQCVQEAGLPAGVLNYLNSSPDRSPEIADALISAKEIRRINFTGSTRVGSIIAQKAAQHLKRCLLELGGKSPLIVLDDADIDAAVKAAVFGSFLFQGQICMSTERLIVDEKIADEFVAKFVEKTKRLSAGDPCVTGDCIIGPMVSPNSGERINGLFKDAIDKGAKVVCGGLAQGALMPATILDHVKSDMRIYDEETFGPITVVIRCKGEAEAVRIANDSVYGLSSGVFGRDINRALRVGMSIEYGSVHINGSTVQNEAQAPYGGTKNTGYGRFDGRAVIDEFTEIKWLTIEPFEQQYPF</sequence>
<dbReference type="EC" id="1.2.1.65"/>
<dbReference type="EMBL" id="AF010471">
    <property type="protein sequence ID" value="AAB62710.1"/>
    <property type="molecule type" value="Genomic_DNA"/>
</dbReference>
<dbReference type="EMBL" id="Y14173">
    <property type="protein sequence ID" value="CAA74578.1"/>
    <property type="molecule type" value="Genomic_DNA"/>
</dbReference>
<dbReference type="RefSeq" id="NP_863075.1">
    <property type="nucleotide sequence ID" value="NC_004999.1"/>
</dbReference>
<dbReference type="RefSeq" id="WP_011117403.1">
    <property type="nucleotide sequence ID" value="NZ_CP059053.1"/>
</dbReference>
<dbReference type="SMR" id="P0A391"/>
<dbReference type="BioCyc" id="MetaCyc:MONOMER-12810"/>
<dbReference type="UniPathway" id="UPA00082"/>
<dbReference type="GO" id="GO:0018485">
    <property type="term" value="F:salicylaldehyde dehydrogenase (NAD+) activity"/>
    <property type="evidence" value="ECO:0007669"/>
    <property type="project" value="UniProtKB-EC"/>
</dbReference>
<dbReference type="GO" id="GO:0009056">
    <property type="term" value="P:catabolic process"/>
    <property type="evidence" value="ECO:0007669"/>
    <property type="project" value="UniProtKB-KW"/>
</dbReference>
<dbReference type="CDD" id="cd07105">
    <property type="entry name" value="ALDH_SaliADH"/>
    <property type="match status" value="1"/>
</dbReference>
<dbReference type="FunFam" id="3.40.309.10:FF:000010">
    <property type="entry name" value="Gamma-aminobutyraldehyde dehydrogenase"/>
    <property type="match status" value="1"/>
</dbReference>
<dbReference type="FunFam" id="3.40.605.10:FF:000007">
    <property type="entry name" value="NAD/NADP-dependent betaine aldehyde dehydrogenase"/>
    <property type="match status" value="1"/>
</dbReference>
<dbReference type="Gene3D" id="3.40.605.10">
    <property type="entry name" value="Aldehyde Dehydrogenase, Chain A, domain 1"/>
    <property type="match status" value="1"/>
</dbReference>
<dbReference type="Gene3D" id="3.40.309.10">
    <property type="entry name" value="Aldehyde Dehydrogenase, Chain A, domain 2"/>
    <property type="match status" value="1"/>
</dbReference>
<dbReference type="InterPro" id="IPR016161">
    <property type="entry name" value="Ald_DH/histidinol_DH"/>
</dbReference>
<dbReference type="InterPro" id="IPR016163">
    <property type="entry name" value="Ald_DH_C"/>
</dbReference>
<dbReference type="InterPro" id="IPR029510">
    <property type="entry name" value="Ald_DH_CS_GLU"/>
</dbReference>
<dbReference type="InterPro" id="IPR016162">
    <property type="entry name" value="Ald_DH_N"/>
</dbReference>
<dbReference type="InterPro" id="IPR015590">
    <property type="entry name" value="Aldehyde_DH_dom"/>
</dbReference>
<dbReference type="PANTHER" id="PTHR42986">
    <property type="entry name" value="BENZALDEHYDE DEHYDROGENASE YFMT"/>
    <property type="match status" value="1"/>
</dbReference>
<dbReference type="PANTHER" id="PTHR42986:SF1">
    <property type="entry name" value="BENZALDEHYDE DEHYDROGENASE YFMT"/>
    <property type="match status" value="1"/>
</dbReference>
<dbReference type="Pfam" id="PF00171">
    <property type="entry name" value="Aldedh"/>
    <property type="match status" value="1"/>
</dbReference>
<dbReference type="SUPFAM" id="SSF53720">
    <property type="entry name" value="ALDH-like"/>
    <property type="match status" value="1"/>
</dbReference>
<dbReference type="PROSITE" id="PS00687">
    <property type="entry name" value="ALDEHYDE_DEHYDR_GLU"/>
    <property type="match status" value="1"/>
</dbReference>
<reference key="1">
    <citation type="submission" date="1997-07" db="EMBL/GenBank/DDBJ databases">
        <title>Nucleotide sequences of genes encoding an upper pathway of naphthalene metabolism of NPL1 plasmid from Pseudomonas putida strain BS202.</title>
        <authorList>
            <person name="Bezborodnikov S.G."/>
            <person name="Boronin A.M."/>
            <person name="Tiedje J.M."/>
        </authorList>
    </citation>
    <scope>NUCLEOTIDE SEQUENCE [GENOMIC DNA]</scope>
    <source>
        <strain>BS202</strain>
        <plasmid>NPL1</plasmid>
    </source>
</reference>
<reference key="2">
    <citation type="submission" date="1997-07" db="EMBL/GenBank/DDBJ databases">
        <authorList>
            <person name="Piruzian E.S."/>
            <person name="Serebryiskaya T.S."/>
            <person name="Lenets A.A."/>
            <person name="Goldenkova I.V."/>
            <person name="Kobets N.S."/>
        </authorList>
    </citation>
    <scope>NUCLEOTIDE SEQUENCE [GENOMIC DNA] OF 221-483</scope>
    <source>
        <strain>BS202</strain>
        <plasmid>NPL-41</plasmid>
    </source>
</reference>
<organism>
    <name type="scientific">Pseudomonas putida</name>
    <name type="common">Arthrobacter siderocapsulatus</name>
    <dbReference type="NCBI Taxonomy" id="303"/>
    <lineage>
        <taxon>Bacteria</taxon>
        <taxon>Pseudomonadati</taxon>
        <taxon>Pseudomonadota</taxon>
        <taxon>Gammaproteobacteria</taxon>
        <taxon>Pseudomonadales</taxon>
        <taxon>Pseudomonadaceae</taxon>
        <taxon>Pseudomonas</taxon>
    </lineage>
</organism>
<comment type="catalytic activity">
    <reaction>
        <text>salicylaldehyde + NAD(+) + H2O = salicylate + NADH + 2 H(+)</text>
        <dbReference type="Rhea" id="RHEA:18537"/>
        <dbReference type="ChEBI" id="CHEBI:15377"/>
        <dbReference type="ChEBI" id="CHEBI:15378"/>
        <dbReference type="ChEBI" id="CHEBI:16008"/>
        <dbReference type="ChEBI" id="CHEBI:30762"/>
        <dbReference type="ChEBI" id="CHEBI:57540"/>
        <dbReference type="ChEBI" id="CHEBI:57945"/>
        <dbReference type="EC" id="1.2.1.65"/>
    </reaction>
</comment>
<comment type="pathway">
    <text>Aromatic compound metabolism; naphthalene degradation.</text>
</comment>
<comment type="similarity">
    <text evidence="3">Belongs to the aldehyde dehydrogenase family.</text>
</comment>
<protein>
    <recommendedName>
        <fullName>Salicylaldehyde dehydrogenase</fullName>
        <ecNumber>1.2.1.65</ecNumber>
    </recommendedName>
</protein>